<accession>Q97Y84</accession>
<organism>
    <name type="scientific">Saccharolobus solfataricus (strain ATCC 35092 / DSM 1617 / JCM 11322 / P2)</name>
    <name type="common">Sulfolobus solfataricus</name>
    <dbReference type="NCBI Taxonomy" id="273057"/>
    <lineage>
        <taxon>Archaea</taxon>
        <taxon>Thermoproteota</taxon>
        <taxon>Thermoprotei</taxon>
        <taxon>Sulfolobales</taxon>
        <taxon>Sulfolobaceae</taxon>
        <taxon>Saccharolobus</taxon>
    </lineage>
</organism>
<name>CAS1B_SACS2</name>
<sequence length="307" mass="34895">MISVRTLVISEYGAYVYVKKNMLVIKKGDKKVEISPSEVDEILITVSCSISTSALSLALTHGISVMFLNSRETPWGILLPSIVTETVKTKKAQYEAIVVRKDNRYGEEIISSKIYNQSVHLKYWARVTGTKNDYKELLDKDEPAAARVYWQNISQLLPKDIGFDGRDVDGTDQFNMALNYSYAILYNTIFKYLVIAGLDPYLGFIHKDRPGNESLVYDFSEMFKPYIDFLLVRALRSGFRLKVKGGLIEENSRGDLAKLIRKGMEENVKEESDHNPKTLIQAIRAHAVKLASSIREGKEYRGFKLVM</sequence>
<keyword id="KW-0051">Antiviral defense</keyword>
<keyword id="KW-0238">DNA-binding</keyword>
<keyword id="KW-0255">Endonuclease</keyword>
<keyword id="KW-0378">Hydrolase</keyword>
<keyword id="KW-0460">Magnesium</keyword>
<keyword id="KW-0464">Manganese</keyword>
<keyword id="KW-0479">Metal-binding</keyword>
<keyword id="KW-0540">Nuclease</keyword>
<keyword id="KW-1185">Reference proteome</keyword>
<keyword id="KW-0694">RNA-binding</keyword>
<dbReference type="EC" id="3.1.-.-" evidence="1"/>
<dbReference type="EMBL" id="AE006641">
    <property type="protein sequence ID" value="AAK41681.1"/>
    <property type="molecule type" value="Genomic_DNA"/>
</dbReference>
<dbReference type="PIR" id="B90303">
    <property type="entry name" value="B90303"/>
</dbReference>
<dbReference type="SMR" id="Q97Y84"/>
<dbReference type="STRING" id="273057.SSO1450"/>
<dbReference type="PaxDb" id="273057-SSO1450"/>
<dbReference type="EnsemblBacteria" id="AAK41681">
    <property type="protein sequence ID" value="AAK41681"/>
    <property type="gene ID" value="SSO1450"/>
</dbReference>
<dbReference type="KEGG" id="sso:SSO1450"/>
<dbReference type="PATRIC" id="fig|273057.12.peg.1480"/>
<dbReference type="eggNOG" id="arCOG01452">
    <property type="taxonomic scope" value="Archaea"/>
</dbReference>
<dbReference type="HOGENOM" id="CLU_052779_0_0_2"/>
<dbReference type="InParanoid" id="Q97Y84"/>
<dbReference type="PhylomeDB" id="Q97Y84"/>
<dbReference type="Proteomes" id="UP000001974">
    <property type="component" value="Chromosome"/>
</dbReference>
<dbReference type="GO" id="GO:0003677">
    <property type="term" value="F:DNA binding"/>
    <property type="evidence" value="ECO:0007669"/>
    <property type="project" value="UniProtKB-KW"/>
</dbReference>
<dbReference type="GO" id="GO:0004519">
    <property type="term" value="F:endonuclease activity"/>
    <property type="evidence" value="ECO:0000318"/>
    <property type="project" value="GO_Central"/>
</dbReference>
<dbReference type="GO" id="GO:0046872">
    <property type="term" value="F:metal ion binding"/>
    <property type="evidence" value="ECO:0007669"/>
    <property type="project" value="UniProtKB-UniRule"/>
</dbReference>
<dbReference type="GO" id="GO:0003723">
    <property type="term" value="F:RNA binding"/>
    <property type="evidence" value="ECO:0007669"/>
    <property type="project" value="UniProtKB-KW"/>
</dbReference>
<dbReference type="GO" id="GO:0099048">
    <property type="term" value="P:CRISPR-cas system"/>
    <property type="evidence" value="ECO:0000318"/>
    <property type="project" value="GO_Central"/>
</dbReference>
<dbReference type="GO" id="GO:0051607">
    <property type="term" value="P:defense response to virus"/>
    <property type="evidence" value="ECO:0007669"/>
    <property type="project" value="UniProtKB-UniRule"/>
</dbReference>
<dbReference type="GO" id="GO:0043571">
    <property type="term" value="P:maintenance of CRISPR repeat elements"/>
    <property type="evidence" value="ECO:0000318"/>
    <property type="project" value="GO_Central"/>
</dbReference>
<dbReference type="CDD" id="cd09634">
    <property type="entry name" value="Cas1_I-II-III"/>
    <property type="match status" value="1"/>
</dbReference>
<dbReference type="Gene3D" id="1.20.120.920">
    <property type="entry name" value="CRISPR-associated endonuclease Cas1, C-terminal domain"/>
    <property type="match status" value="1"/>
</dbReference>
<dbReference type="Gene3D" id="3.100.10.20">
    <property type="entry name" value="CRISPR-associated endonuclease Cas1, N-terminal domain"/>
    <property type="match status" value="1"/>
</dbReference>
<dbReference type="HAMAP" id="MF_01470">
    <property type="entry name" value="Cas1"/>
    <property type="match status" value="1"/>
</dbReference>
<dbReference type="InterPro" id="IPR050646">
    <property type="entry name" value="Cas1"/>
</dbReference>
<dbReference type="InterPro" id="IPR002729">
    <property type="entry name" value="CRISPR-assoc_Cas1"/>
</dbReference>
<dbReference type="InterPro" id="IPR042206">
    <property type="entry name" value="CRISPR-assoc_Cas1_C"/>
</dbReference>
<dbReference type="InterPro" id="IPR042211">
    <property type="entry name" value="CRISPR-assoc_Cas1_N"/>
</dbReference>
<dbReference type="NCBIfam" id="TIGR00287">
    <property type="entry name" value="cas1"/>
    <property type="match status" value="1"/>
</dbReference>
<dbReference type="PANTHER" id="PTHR34353">
    <property type="entry name" value="CRISPR-ASSOCIATED ENDONUCLEASE CAS1 1"/>
    <property type="match status" value="1"/>
</dbReference>
<dbReference type="PANTHER" id="PTHR34353:SF2">
    <property type="entry name" value="CRISPR-ASSOCIATED ENDONUCLEASE CAS1 1"/>
    <property type="match status" value="1"/>
</dbReference>
<dbReference type="Pfam" id="PF01867">
    <property type="entry name" value="Cas_Cas1"/>
    <property type="match status" value="1"/>
</dbReference>
<feature type="chain" id="PRO_0000417111" description="CRISPR-associated endonuclease Cas1 2">
    <location>
        <begin position="1"/>
        <end position="307"/>
    </location>
</feature>
<feature type="binding site" evidence="1 4">
    <location>
        <position position="142"/>
    </location>
    <ligand>
        <name>Mn(2+)</name>
        <dbReference type="ChEBI" id="CHEBI:29035"/>
    </ligand>
</feature>
<feature type="binding site" evidence="1">
    <location>
        <position position="206"/>
    </location>
    <ligand>
        <name>Mn(2+)</name>
        <dbReference type="ChEBI" id="CHEBI:29035"/>
    </ligand>
</feature>
<feature type="binding site" evidence="1">
    <location>
        <position position="221"/>
    </location>
    <ligand>
        <name>Mn(2+)</name>
        <dbReference type="ChEBI" id="CHEBI:29035"/>
    </ligand>
</feature>
<feature type="mutagenesis site" description="No longer catalyzes a transesterification reaction on branched DNA." evidence="3">
    <original>E</original>
    <variation>A</variation>
    <location>
        <position position="142"/>
    </location>
</feature>
<reference key="1">
    <citation type="journal article" date="2001" name="Proc. Natl. Acad. Sci. U.S.A.">
        <title>The complete genome of the crenarchaeon Sulfolobus solfataricus P2.</title>
        <authorList>
            <person name="She Q."/>
            <person name="Singh R.K."/>
            <person name="Confalonieri F."/>
            <person name="Zivanovic Y."/>
            <person name="Allard G."/>
            <person name="Awayez M.J."/>
            <person name="Chan-Weiher C.C.-Y."/>
            <person name="Clausen I.G."/>
            <person name="Curtis B.A."/>
            <person name="De Moors A."/>
            <person name="Erauso G."/>
            <person name="Fletcher C."/>
            <person name="Gordon P.M.K."/>
            <person name="Heikamp-de Jong I."/>
            <person name="Jeffries A.C."/>
            <person name="Kozera C.J."/>
            <person name="Medina N."/>
            <person name="Peng X."/>
            <person name="Thi-Ngoc H.P."/>
            <person name="Redder P."/>
            <person name="Schenk M.E."/>
            <person name="Theriault C."/>
            <person name="Tolstrup N."/>
            <person name="Charlebois R.L."/>
            <person name="Doolittle W.F."/>
            <person name="Duguet M."/>
            <person name="Gaasterland T."/>
            <person name="Garrett R.A."/>
            <person name="Ragan M.A."/>
            <person name="Sensen C.W."/>
            <person name="Van der Oost J."/>
        </authorList>
    </citation>
    <scope>NUCLEOTIDE SEQUENCE [LARGE SCALE GENOMIC DNA]</scope>
    <source>
        <strain>ATCC 35092 / DSM 1617 / JCM 11322 / P2</strain>
    </source>
</reference>
<reference key="2">
    <citation type="journal article" date="2009" name="FEBS Lett.">
        <title>SSO1450--a CAS1 protein from Sulfolobus solfataricus P2 with high affinity for RNA and DNA.</title>
        <authorList>
            <person name="Han D."/>
            <person name="Lehmann K."/>
            <person name="Krauss G."/>
        </authorList>
    </citation>
    <scope>FUNCTION</scope>
    <scope>SUBUNIT</scope>
    <scope>DNA-BINDING</scope>
    <scope>RNA-BINDING</scope>
    <source>
        <strain>ATCC 35092 / DSM 1617 / JCM 11322 / P2</strain>
    </source>
</reference>
<reference key="3">
    <citation type="journal article" date="2015" name="Elife">
        <title>Intrinsic sequence specificity of the Cas1 integrase directs new spacer acquisition.</title>
        <authorList>
            <person name="Rollie C."/>
            <person name="Schneider S."/>
            <person name="Brinkmann A.S."/>
            <person name="Bolt E.L."/>
            <person name="White M.F."/>
        </authorList>
    </citation>
    <scope>FUNCTION</scope>
    <scope>MUTAGENESIS OF GLU-142</scope>
    <source>
        <strain>ATCC 35092 / DSM 1617 / JCM 11322 / P2</strain>
    </source>
</reference>
<proteinExistence type="evidence at protein level"/>
<protein>
    <recommendedName>
        <fullName evidence="1">CRISPR-associated endonuclease Cas1 2</fullName>
        <ecNumber evidence="1">3.1.-.-</ecNumber>
    </recommendedName>
</protein>
<comment type="function">
    <text evidence="1">CRISPR (clustered regularly interspaced short palindromic repeat), is an adaptive immune system that provides protection against mobile genetic elements (viruses, transposable elements and conjugative plasmids). CRISPR clusters contain spacers, sequences complementary to antecedent mobile elements, and target invading nucleic acids. CRISPR clusters are transcribed and processed into CRISPR RNA (crRNA). Acts as a dsDNA endonuclease. Involved in the integration of spacer DNA into the CRISPR cassette.</text>
</comment>
<comment type="function">
    <text evidence="2 3">In vitro catalyzes a concerted transesterification reaction on branched DNA, as would be expected during integration of protospacers into the CRISPR leader sequence; Cas2 is not required in vitro. This reaction requires a 3'-OH group at the branch point (PubMed:26284603). Binds ss- and dsDNA and ss- and dsRNA with approximately equal affinity. May be able to anneal complementary DNA strands (PubMed:19427858).</text>
</comment>
<comment type="cofactor">
    <cofactor evidence="1">
        <name>Mg(2+)</name>
        <dbReference type="ChEBI" id="CHEBI:18420"/>
    </cofactor>
    <cofactor evidence="1">
        <name>Mn(2+)</name>
        <dbReference type="ChEBI" id="CHEBI:29035"/>
    </cofactor>
</comment>
<comment type="subunit">
    <text evidence="1 2">Homodimer, forms a heterotetramer with a Cas2 homodimer (By similarity). Forms oligomers, probably binds nucleic acids as a homodimer (PubMed:19427858).</text>
</comment>
<comment type="similarity">
    <text evidence="1">Belongs to the CRISPR-associated endonuclease Cas1 family.</text>
</comment>
<evidence type="ECO:0000255" key="1">
    <source>
        <dbReference type="HAMAP-Rule" id="MF_01470"/>
    </source>
</evidence>
<evidence type="ECO:0000269" key="2">
    <source>
    </source>
</evidence>
<evidence type="ECO:0000269" key="3">
    <source>
    </source>
</evidence>
<evidence type="ECO:0000305" key="4">
    <source>
    </source>
</evidence>
<gene>
    <name evidence="1" type="primary">cas1-2</name>
    <name type="ordered locus">SSO1450</name>
</gene>